<name>PDXT_SACI3</name>
<accession>C3N6C7</accession>
<protein>
    <recommendedName>
        <fullName evidence="1">Pyridoxal 5'-phosphate synthase subunit PdxT</fullName>
        <ecNumber evidence="1">4.3.3.6</ecNumber>
    </recommendedName>
    <alternativeName>
        <fullName evidence="1">Pdx2</fullName>
    </alternativeName>
    <alternativeName>
        <fullName evidence="1">Pyridoxal 5'-phosphate synthase glutaminase subunit</fullName>
        <ecNumber evidence="1">3.5.1.2</ecNumber>
    </alternativeName>
</protein>
<organism>
    <name type="scientific">Saccharolobus islandicus (strain M.16.27)</name>
    <name type="common">Sulfolobus islandicus</name>
    <dbReference type="NCBI Taxonomy" id="427318"/>
    <lineage>
        <taxon>Archaea</taxon>
        <taxon>Thermoproteota</taxon>
        <taxon>Thermoprotei</taxon>
        <taxon>Sulfolobales</taxon>
        <taxon>Sulfolobaceae</taxon>
        <taxon>Saccharolobus</taxon>
    </lineage>
</organism>
<evidence type="ECO:0000255" key="1">
    <source>
        <dbReference type="HAMAP-Rule" id="MF_01615"/>
    </source>
</evidence>
<gene>
    <name evidence="1" type="primary">pdxT</name>
    <name type="ordered locus">M1627_1674</name>
</gene>
<dbReference type="EC" id="4.3.3.6" evidence="1"/>
<dbReference type="EC" id="3.5.1.2" evidence="1"/>
<dbReference type="EMBL" id="CP001401">
    <property type="protein sequence ID" value="ACP55552.1"/>
    <property type="molecule type" value="Genomic_DNA"/>
</dbReference>
<dbReference type="RefSeq" id="WP_012711552.1">
    <property type="nucleotide sequence ID" value="NC_012632.1"/>
</dbReference>
<dbReference type="SMR" id="C3N6C7"/>
<dbReference type="GeneID" id="84061869"/>
<dbReference type="KEGG" id="sim:M1627_1674"/>
<dbReference type="HOGENOM" id="CLU_069674_2_0_2"/>
<dbReference type="UniPathway" id="UPA00245"/>
<dbReference type="Proteomes" id="UP000002307">
    <property type="component" value="Chromosome"/>
</dbReference>
<dbReference type="GO" id="GO:0005829">
    <property type="term" value="C:cytosol"/>
    <property type="evidence" value="ECO:0007669"/>
    <property type="project" value="TreeGrafter"/>
</dbReference>
<dbReference type="GO" id="GO:1903600">
    <property type="term" value="C:glutaminase complex"/>
    <property type="evidence" value="ECO:0007669"/>
    <property type="project" value="TreeGrafter"/>
</dbReference>
<dbReference type="GO" id="GO:0004359">
    <property type="term" value="F:glutaminase activity"/>
    <property type="evidence" value="ECO:0007669"/>
    <property type="project" value="UniProtKB-UniRule"/>
</dbReference>
<dbReference type="GO" id="GO:0036381">
    <property type="term" value="F:pyridoxal 5'-phosphate synthase (glutamine hydrolysing) activity"/>
    <property type="evidence" value="ECO:0007669"/>
    <property type="project" value="UniProtKB-UniRule"/>
</dbReference>
<dbReference type="GO" id="GO:0006543">
    <property type="term" value="P:glutamine catabolic process"/>
    <property type="evidence" value="ECO:0007669"/>
    <property type="project" value="UniProtKB-UniRule"/>
</dbReference>
<dbReference type="GO" id="GO:0042823">
    <property type="term" value="P:pyridoxal phosphate biosynthetic process"/>
    <property type="evidence" value="ECO:0007669"/>
    <property type="project" value="UniProtKB-UniRule"/>
</dbReference>
<dbReference type="GO" id="GO:0008614">
    <property type="term" value="P:pyridoxine metabolic process"/>
    <property type="evidence" value="ECO:0007669"/>
    <property type="project" value="TreeGrafter"/>
</dbReference>
<dbReference type="CDD" id="cd01749">
    <property type="entry name" value="GATase1_PB"/>
    <property type="match status" value="1"/>
</dbReference>
<dbReference type="FunFam" id="3.40.50.880:FF:000041">
    <property type="entry name" value="Glutamine amidotransferase subunit pdxT, putative"/>
    <property type="match status" value="1"/>
</dbReference>
<dbReference type="Gene3D" id="3.40.50.880">
    <property type="match status" value="1"/>
</dbReference>
<dbReference type="HAMAP" id="MF_01615">
    <property type="entry name" value="PdxT"/>
    <property type="match status" value="1"/>
</dbReference>
<dbReference type="InterPro" id="IPR029062">
    <property type="entry name" value="Class_I_gatase-like"/>
</dbReference>
<dbReference type="InterPro" id="IPR002161">
    <property type="entry name" value="PdxT/SNO"/>
</dbReference>
<dbReference type="InterPro" id="IPR021196">
    <property type="entry name" value="PdxT/SNO_CS"/>
</dbReference>
<dbReference type="NCBIfam" id="TIGR03800">
    <property type="entry name" value="PLP_synth_Pdx2"/>
    <property type="match status" value="1"/>
</dbReference>
<dbReference type="PANTHER" id="PTHR31559">
    <property type="entry name" value="PYRIDOXAL 5'-PHOSPHATE SYNTHASE SUBUNIT SNO"/>
    <property type="match status" value="1"/>
</dbReference>
<dbReference type="PANTHER" id="PTHR31559:SF0">
    <property type="entry name" value="PYRIDOXAL 5'-PHOSPHATE SYNTHASE SUBUNIT SNO1-RELATED"/>
    <property type="match status" value="1"/>
</dbReference>
<dbReference type="Pfam" id="PF01174">
    <property type="entry name" value="SNO"/>
    <property type="match status" value="1"/>
</dbReference>
<dbReference type="PIRSF" id="PIRSF005639">
    <property type="entry name" value="Glut_amidoT_SNO"/>
    <property type="match status" value="1"/>
</dbReference>
<dbReference type="SUPFAM" id="SSF52317">
    <property type="entry name" value="Class I glutamine amidotransferase-like"/>
    <property type="match status" value="1"/>
</dbReference>
<dbReference type="PROSITE" id="PS01236">
    <property type="entry name" value="PDXT_SNO_1"/>
    <property type="match status" value="1"/>
</dbReference>
<dbReference type="PROSITE" id="PS51130">
    <property type="entry name" value="PDXT_SNO_2"/>
    <property type="match status" value="1"/>
</dbReference>
<reference key="1">
    <citation type="journal article" date="2009" name="Proc. Natl. Acad. Sci. U.S.A.">
        <title>Biogeography of the Sulfolobus islandicus pan-genome.</title>
        <authorList>
            <person name="Reno M.L."/>
            <person name="Held N.L."/>
            <person name="Fields C.J."/>
            <person name="Burke P.V."/>
            <person name="Whitaker R.J."/>
        </authorList>
    </citation>
    <scope>NUCLEOTIDE SEQUENCE [LARGE SCALE GENOMIC DNA]</scope>
    <source>
        <strain>M.16.27</strain>
    </source>
</reference>
<keyword id="KW-0315">Glutamine amidotransferase</keyword>
<keyword id="KW-0378">Hydrolase</keyword>
<keyword id="KW-0456">Lyase</keyword>
<keyword id="KW-0663">Pyridoxal phosphate</keyword>
<proteinExistence type="inferred from homology"/>
<comment type="function">
    <text evidence="1">Catalyzes the hydrolysis of glutamine to glutamate and ammonia as part of the biosynthesis of pyridoxal 5'-phosphate. The resulting ammonia molecule is channeled to the active site of PdxS.</text>
</comment>
<comment type="catalytic activity">
    <reaction evidence="1">
        <text>aldehydo-D-ribose 5-phosphate + D-glyceraldehyde 3-phosphate + L-glutamine = pyridoxal 5'-phosphate + L-glutamate + phosphate + 3 H2O + H(+)</text>
        <dbReference type="Rhea" id="RHEA:31507"/>
        <dbReference type="ChEBI" id="CHEBI:15377"/>
        <dbReference type="ChEBI" id="CHEBI:15378"/>
        <dbReference type="ChEBI" id="CHEBI:29985"/>
        <dbReference type="ChEBI" id="CHEBI:43474"/>
        <dbReference type="ChEBI" id="CHEBI:58273"/>
        <dbReference type="ChEBI" id="CHEBI:58359"/>
        <dbReference type="ChEBI" id="CHEBI:59776"/>
        <dbReference type="ChEBI" id="CHEBI:597326"/>
        <dbReference type="EC" id="4.3.3.6"/>
    </reaction>
</comment>
<comment type="catalytic activity">
    <reaction evidence="1">
        <text>L-glutamine + H2O = L-glutamate + NH4(+)</text>
        <dbReference type="Rhea" id="RHEA:15889"/>
        <dbReference type="ChEBI" id="CHEBI:15377"/>
        <dbReference type="ChEBI" id="CHEBI:28938"/>
        <dbReference type="ChEBI" id="CHEBI:29985"/>
        <dbReference type="ChEBI" id="CHEBI:58359"/>
        <dbReference type="EC" id="3.5.1.2"/>
    </reaction>
</comment>
<comment type="pathway">
    <text evidence="1">Cofactor biosynthesis; pyridoxal 5'-phosphate biosynthesis.</text>
</comment>
<comment type="subunit">
    <text evidence="1">In the presence of PdxS, forms a dodecamer of heterodimers. Only shows activity in the heterodimer.</text>
</comment>
<comment type="similarity">
    <text evidence="1">Belongs to the glutaminase PdxT/SNO family.</text>
</comment>
<feature type="chain" id="PRO_1000215721" description="Pyridoxal 5'-phosphate synthase subunit PdxT">
    <location>
        <begin position="1"/>
        <end position="200"/>
    </location>
</feature>
<feature type="active site" description="Nucleophile" evidence="1">
    <location>
        <position position="84"/>
    </location>
</feature>
<feature type="active site" description="Charge relay system" evidence="1">
    <location>
        <position position="181"/>
    </location>
</feature>
<feature type="active site" description="Charge relay system" evidence="1">
    <location>
        <position position="183"/>
    </location>
</feature>
<feature type="binding site" evidence="1">
    <location>
        <begin position="52"/>
        <end position="54"/>
    </location>
    <ligand>
        <name>L-glutamine</name>
        <dbReference type="ChEBI" id="CHEBI:58359"/>
    </ligand>
</feature>
<feature type="binding site" evidence="1">
    <location>
        <position position="116"/>
    </location>
    <ligand>
        <name>L-glutamine</name>
        <dbReference type="ChEBI" id="CHEBI:58359"/>
    </ligand>
</feature>
<feature type="binding site" evidence="1">
    <location>
        <begin position="145"/>
        <end position="146"/>
    </location>
    <ligand>
        <name>L-glutamine</name>
        <dbReference type="ChEBI" id="CHEBI:58359"/>
    </ligand>
</feature>
<sequence>MKIGIIAYQGSFEEHYLQLKRAFDKLSINGEITPVKIPKDLKDIDGVIIPGGESTTIGLVAKRLGILDELKEKITSGLPVMGTCAGAIMLAKEVSDAKVGKTSQPLIGAMNISIIRNYYGRQRESFEAIIDLSKIGKGKANVVFIRAPAITKLWGKAQSLAELNGVTVLAEENNILATTFHPELSDTTSIHEYFLHLVKG</sequence>